<gene>
    <name evidence="3" type="primary">oryJ</name>
    <name type="ORF">AO090010000166</name>
</gene>
<keyword id="KW-1185">Reference proteome</keyword>
<accession>Q2TXF5</accession>
<sequence>MGSLPEKDFPQVHRFITTHKEDGTPTFETKIPEPIEWERTNIGVDFFLAYTLGSFPAPLSHDADLNQYKDHLVNHPPFMIPGGAVVRYVDYHPGCEPMWHRTVTVDFGVVIEGELELEVEGGEKRLMKRGDVAVQRGTNHCWRNPSKTQFARALYIALDAKPVIVNGQELGESLGEVKH</sequence>
<comment type="function">
    <text evidence="2 5">Part of the gene cluster that mediates the biosynthesis of oryzines, natural products with an unusual maleidride backbone (PubMed:30104550). The two subunits of the fungal fatty acid synthase oryfasA and oryfasB probably form octenoic acid (Probable). This fatty acid is most likely activated by the acyl-CoA ligase oryP to give octenyl-CoA before the citrate synthase-like protein oryE catalyzes condensation with oxaloacetate to form tricarboxylic acid (Probable). The next steps of the pathways are conjectural, but a favorite possible route has been proposed, beginning with decarboxylation and concomitant dehydration by the decarboxylase oryM, followed by tautomerization, which may lead to the production of a diene intermediate (Probable). Reduction of this diene intermediate could give the known metabolite piliformic acid (Probable). On the pathway to oryzine B and oryzine A, however, hydroxylation of the diene by the alpha-ketoglutarate-dependent dioxygenase oryG and lactonisation by the lactonohydrolases oryH or oryL could give oryzine B directly (Probable). Finally, enoyl reduction by the dehydrogenase oryD would then convert oryzine B into oryzine A (Probable).</text>
</comment>
<comment type="pathway">
    <text evidence="5">Secondary metabolite biosynthesis.</text>
</comment>
<comment type="similarity">
    <text evidence="4">Belongs to the oryJ family.</text>
</comment>
<comment type="sequence caution" evidence="4">
    <conflict type="erroneous gene model prediction">
        <sequence resource="EMBL-CDS" id="BAE66068"/>
    </conflict>
</comment>
<feature type="chain" id="PRO_0000450499" description="Oryzines biosynthesis cluster protein J">
    <location>
        <begin position="1"/>
        <end position="179"/>
    </location>
</feature>
<feature type="domain" description="Cupin type-2" evidence="1">
    <location>
        <begin position="88"/>
        <end position="148"/>
    </location>
</feature>
<dbReference type="EMBL" id="BA000056">
    <property type="protein sequence ID" value="BAE66068.1"/>
    <property type="status" value="ALT_SEQ"/>
    <property type="molecule type" value="Genomic_DNA"/>
</dbReference>
<dbReference type="RefSeq" id="XP_001827201.2">
    <property type="nucleotide sequence ID" value="XM_001827149.2"/>
</dbReference>
<dbReference type="SMR" id="Q2TXF5"/>
<dbReference type="EnsemblFungi" id="BAE66068">
    <property type="protein sequence ID" value="BAE66068"/>
    <property type="gene ID" value="AO090010000166"/>
</dbReference>
<dbReference type="HOGENOM" id="CLU_096188_0_1_1"/>
<dbReference type="Proteomes" id="UP000006564">
    <property type="component" value="Chromosome 8"/>
</dbReference>
<dbReference type="CDD" id="cd02231">
    <property type="entry name" value="cupin_BLL6423-like"/>
    <property type="match status" value="1"/>
</dbReference>
<dbReference type="Gene3D" id="2.60.120.10">
    <property type="entry name" value="Jelly Rolls"/>
    <property type="match status" value="1"/>
</dbReference>
<dbReference type="InterPro" id="IPR013096">
    <property type="entry name" value="Cupin_2"/>
</dbReference>
<dbReference type="InterPro" id="IPR047142">
    <property type="entry name" value="OryJ/VirC-like"/>
</dbReference>
<dbReference type="InterPro" id="IPR014710">
    <property type="entry name" value="RmlC-like_jellyroll"/>
</dbReference>
<dbReference type="InterPro" id="IPR011051">
    <property type="entry name" value="RmlC_Cupin_sf"/>
</dbReference>
<dbReference type="PANTHER" id="PTHR36156:SF3">
    <property type="entry name" value="CUPIN 2 CONSERVED BARREL DOMAIN-CONTAINING PROTEIN"/>
    <property type="match status" value="1"/>
</dbReference>
<dbReference type="PANTHER" id="PTHR36156">
    <property type="entry name" value="SLR2101 PROTEIN"/>
    <property type="match status" value="1"/>
</dbReference>
<dbReference type="Pfam" id="PF07883">
    <property type="entry name" value="Cupin_2"/>
    <property type="match status" value="1"/>
</dbReference>
<dbReference type="SUPFAM" id="SSF51182">
    <property type="entry name" value="RmlC-like cupins"/>
    <property type="match status" value="1"/>
</dbReference>
<proteinExistence type="inferred from homology"/>
<organism>
    <name type="scientific">Aspergillus oryzae (strain ATCC 42149 / RIB 40)</name>
    <name type="common">Yellow koji mold</name>
    <dbReference type="NCBI Taxonomy" id="510516"/>
    <lineage>
        <taxon>Eukaryota</taxon>
        <taxon>Fungi</taxon>
        <taxon>Dikarya</taxon>
        <taxon>Ascomycota</taxon>
        <taxon>Pezizomycotina</taxon>
        <taxon>Eurotiomycetes</taxon>
        <taxon>Eurotiomycetidae</taxon>
        <taxon>Eurotiales</taxon>
        <taxon>Aspergillaceae</taxon>
        <taxon>Aspergillus</taxon>
        <taxon>Aspergillus subgen. Circumdati</taxon>
    </lineage>
</organism>
<reference key="1">
    <citation type="journal article" date="2005" name="Nature">
        <title>Genome sequencing and analysis of Aspergillus oryzae.</title>
        <authorList>
            <person name="Machida M."/>
            <person name="Asai K."/>
            <person name="Sano M."/>
            <person name="Tanaka T."/>
            <person name="Kumagai T."/>
            <person name="Terai G."/>
            <person name="Kusumoto K."/>
            <person name="Arima T."/>
            <person name="Akita O."/>
            <person name="Kashiwagi Y."/>
            <person name="Abe K."/>
            <person name="Gomi K."/>
            <person name="Horiuchi H."/>
            <person name="Kitamoto K."/>
            <person name="Kobayashi T."/>
            <person name="Takeuchi M."/>
            <person name="Denning D.W."/>
            <person name="Galagan J.E."/>
            <person name="Nierman W.C."/>
            <person name="Yu J."/>
            <person name="Archer D.B."/>
            <person name="Bennett J.W."/>
            <person name="Bhatnagar D."/>
            <person name="Cleveland T.E."/>
            <person name="Fedorova N.D."/>
            <person name="Gotoh O."/>
            <person name="Horikawa H."/>
            <person name="Hosoyama A."/>
            <person name="Ichinomiya M."/>
            <person name="Igarashi R."/>
            <person name="Iwashita K."/>
            <person name="Juvvadi P.R."/>
            <person name="Kato M."/>
            <person name="Kato Y."/>
            <person name="Kin T."/>
            <person name="Kokubun A."/>
            <person name="Maeda H."/>
            <person name="Maeyama N."/>
            <person name="Maruyama J."/>
            <person name="Nagasaki H."/>
            <person name="Nakajima T."/>
            <person name="Oda K."/>
            <person name="Okada K."/>
            <person name="Paulsen I."/>
            <person name="Sakamoto K."/>
            <person name="Sawano T."/>
            <person name="Takahashi M."/>
            <person name="Takase K."/>
            <person name="Terabayashi Y."/>
            <person name="Wortman J.R."/>
            <person name="Yamada O."/>
            <person name="Yamagata Y."/>
            <person name="Anazawa H."/>
            <person name="Hata Y."/>
            <person name="Koide Y."/>
            <person name="Komori T."/>
            <person name="Koyama Y."/>
            <person name="Minetoki T."/>
            <person name="Suharnan S."/>
            <person name="Tanaka A."/>
            <person name="Isono K."/>
            <person name="Kuhara S."/>
            <person name="Ogasawara N."/>
            <person name="Kikuchi H."/>
        </authorList>
    </citation>
    <scope>NUCLEOTIDE SEQUENCE [LARGE SCALE GENOMIC DNA]</scope>
    <source>
        <strain>ATCC 42149 / RIB 40</strain>
    </source>
</reference>
<reference key="2">
    <citation type="journal article" date="2018" name="J. Fungi">
        <title>Oryzines A &amp; B, maleidride congeners from Aspergillus oryzae and their putative biosynthesis.</title>
        <authorList>
            <person name="Wasil Z."/>
            <person name="Kuhnert E."/>
            <person name="Simpson T.J."/>
            <person name="Cox R.J."/>
        </authorList>
    </citation>
    <scope>FUNCTION</scope>
    <scope>PATHWAY</scope>
</reference>
<name>ORYJ_ASPOR</name>
<evidence type="ECO:0000255" key="1"/>
<evidence type="ECO:0000269" key="2">
    <source>
    </source>
</evidence>
<evidence type="ECO:0000303" key="3">
    <source>
    </source>
</evidence>
<evidence type="ECO:0000305" key="4"/>
<evidence type="ECO:0000305" key="5">
    <source>
    </source>
</evidence>
<protein>
    <recommendedName>
        <fullName evidence="3">Oryzines biosynthesis cluster protein J</fullName>
    </recommendedName>
</protein>